<evidence type="ECO:0000255" key="1">
    <source>
        <dbReference type="HAMAP-Rule" id="MF_00173"/>
    </source>
</evidence>
<evidence type="ECO:0007829" key="2">
    <source>
        <dbReference type="PDB" id="5CJ9"/>
    </source>
</evidence>
<comment type="function">
    <text evidence="1">Regulates arginine biosynthesis genes.</text>
</comment>
<comment type="pathway">
    <text>Amino-acid biosynthesis; L-arginine biosynthesis [regulation].</text>
</comment>
<comment type="subcellular location">
    <subcellularLocation>
        <location evidence="1">Cytoplasm</location>
    </subcellularLocation>
</comment>
<comment type="similarity">
    <text evidence="1">Belongs to the ArgR family.</text>
</comment>
<proteinExistence type="evidence at protein level"/>
<dbReference type="EMBL" id="BA000004">
    <property type="protein sequence ID" value="BAB06496.1"/>
    <property type="molecule type" value="Genomic_DNA"/>
</dbReference>
<dbReference type="PIR" id="A83997">
    <property type="entry name" value="A83997"/>
</dbReference>
<dbReference type="RefSeq" id="WP_010898925.1">
    <property type="nucleotide sequence ID" value="NC_002570.2"/>
</dbReference>
<dbReference type="PDB" id="5CJ9">
    <property type="method" value="X-ray"/>
    <property type="resolution" value="2.41 A"/>
    <property type="chains" value="A=6-149"/>
</dbReference>
<dbReference type="PDBsum" id="5CJ9"/>
<dbReference type="SMR" id="Q9K973"/>
<dbReference type="STRING" id="272558.gene:10728677"/>
<dbReference type="GeneID" id="87598295"/>
<dbReference type="KEGG" id="bha:BH2777"/>
<dbReference type="eggNOG" id="COG1438">
    <property type="taxonomic scope" value="Bacteria"/>
</dbReference>
<dbReference type="HOGENOM" id="CLU_097103_3_0_9"/>
<dbReference type="OrthoDB" id="9807089at2"/>
<dbReference type="UniPathway" id="UPA00068"/>
<dbReference type="Proteomes" id="UP000001258">
    <property type="component" value="Chromosome"/>
</dbReference>
<dbReference type="GO" id="GO:0005737">
    <property type="term" value="C:cytoplasm"/>
    <property type="evidence" value="ECO:0007669"/>
    <property type="project" value="UniProtKB-SubCell"/>
</dbReference>
<dbReference type="GO" id="GO:0034618">
    <property type="term" value="F:arginine binding"/>
    <property type="evidence" value="ECO:0007669"/>
    <property type="project" value="InterPro"/>
</dbReference>
<dbReference type="GO" id="GO:0003677">
    <property type="term" value="F:DNA binding"/>
    <property type="evidence" value="ECO:0007669"/>
    <property type="project" value="UniProtKB-KW"/>
</dbReference>
<dbReference type="GO" id="GO:0003700">
    <property type="term" value="F:DNA-binding transcription factor activity"/>
    <property type="evidence" value="ECO:0007669"/>
    <property type="project" value="UniProtKB-UniRule"/>
</dbReference>
<dbReference type="GO" id="GO:0006526">
    <property type="term" value="P:L-arginine biosynthetic process"/>
    <property type="evidence" value="ECO:0007669"/>
    <property type="project" value="UniProtKB-UniPathway"/>
</dbReference>
<dbReference type="GO" id="GO:0051259">
    <property type="term" value="P:protein complex oligomerization"/>
    <property type="evidence" value="ECO:0007669"/>
    <property type="project" value="InterPro"/>
</dbReference>
<dbReference type="GO" id="GO:1900079">
    <property type="term" value="P:regulation of arginine biosynthetic process"/>
    <property type="evidence" value="ECO:0007669"/>
    <property type="project" value="UniProtKB-UniRule"/>
</dbReference>
<dbReference type="FunFam" id="3.30.1360.40:FF:000006">
    <property type="entry name" value="Arginine repressor"/>
    <property type="match status" value="1"/>
</dbReference>
<dbReference type="Gene3D" id="3.30.1360.40">
    <property type="match status" value="1"/>
</dbReference>
<dbReference type="Gene3D" id="1.10.10.10">
    <property type="entry name" value="Winged helix-like DNA-binding domain superfamily/Winged helix DNA-binding domain"/>
    <property type="match status" value="1"/>
</dbReference>
<dbReference type="HAMAP" id="MF_00173">
    <property type="entry name" value="Arg_repressor"/>
    <property type="match status" value="1"/>
</dbReference>
<dbReference type="InterPro" id="IPR001669">
    <property type="entry name" value="Arg_repress"/>
</dbReference>
<dbReference type="InterPro" id="IPR020899">
    <property type="entry name" value="Arg_repress_C"/>
</dbReference>
<dbReference type="InterPro" id="IPR036251">
    <property type="entry name" value="Arg_repress_C_sf"/>
</dbReference>
<dbReference type="InterPro" id="IPR020900">
    <property type="entry name" value="Arg_repress_DNA-bd"/>
</dbReference>
<dbReference type="InterPro" id="IPR036388">
    <property type="entry name" value="WH-like_DNA-bd_sf"/>
</dbReference>
<dbReference type="InterPro" id="IPR036390">
    <property type="entry name" value="WH_DNA-bd_sf"/>
</dbReference>
<dbReference type="NCBIfam" id="TIGR01529">
    <property type="entry name" value="argR_whole"/>
    <property type="match status" value="1"/>
</dbReference>
<dbReference type="NCBIfam" id="NF003281">
    <property type="entry name" value="PRK04280.1"/>
    <property type="match status" value="1"/>
</dbReference>
<dbReference type="PANTHER" id="PTHR34471">
    <property type="entry name" value="ARGININE REPRESSOR"/>
    <property type="match status" value="1"/>
</dbReference>
<dbReference type="PANTHER" id="PTHR34471:SF1">
    <property type="entry name" value="ARGININE REPRESSOR"/>
    <property type="match status" value="1"/>
</dbReference>
<dbReference type="Pfam" id="PF01316">
    <property type="entry name" value="Arg_repressor"/>
    <property type="match status" value="1"/>
</dbReference>
<dbReference type="Pfam" id="PF02863">
    <property type="entry name" value="Arg_repressor_C"/>
    <property type="match status" value="1"/>
</dbReference>
<dbReference type="PRINTS" id="PR01467">
    <property type="entry name" value="ARGREPRESSOR"/>
</dbReference>
<dbReference type="SUPFAM" id="SSF55252">
    <property type="entry name" value="C-terminal domain of arginine repressor"/>
    <property type="match status" value="1"/>
</dbReference>
<dbReference type="SUPFAM" id="SSF46785">
    <property type="entry name" value="Winged helix' DNA-binding domain"/>
    <property type="match status" value="1"/>
</dbReference>
<keyword id="KW-0002">3D-structure</keyword>
<keyword id="KW-0028">Amino-acid biosynthesis</keyword>
<keyword id="KW-0055">Arginine biosynthesis</keyword>
<keyword id="KW-0963">Cytoplasm</keyword>
<keyword id="KW-0238">DNA-binding</keyword>
<keyword id="KW-1185">Reference proteome</keyword>
<keyword id="KW-0678">Repressor</keyword>
<keyword id="KW-0804">Transcription</keyword>
<keyword id="KW-0805">Transcription regulation</keyword>
<gene>
    <name evidence="1" type="primary">argR</name>
    <name type="synonym">ahrC</name>
    <name type="ordered locus">BH2777</name>
</gene>
<sequence length="149" mass="16836">MNKGQRHIKIREIIANNDVETQDELVEQLKAAGYNVTQATVSRDIKELHLVKVPMMDGRYKYSLPADQRFNPLQKLKRGLVDSFVSIDRTDNLIVMKTLPGNAHAIGALIDNLDWTEIMGTICGDDTILIICKDKQDGPVVTERFLNML</sequence>
<accession>Q9K973</accession>
<reference key="1">
    <citation type="journal article" date="2000" name="Nucleic Acids Res.">
        <title>Complete genome sequence of the alkaliphilic bacterium Bacillus halodurans and genomic sequence comparison with Bacillus subtilis.</title>
        <authorList>
            <person name="Takami H."/>
            <person name="Nakasone K."/>
            <person name="Takaki Y."/>
            <person name="Maeno G."/>
            <person name="Sasaki R."/>
            <person name="Masui N."/>
            <person name="Fuji F."/>
            <person name="Hirama C."/>
            <person name="Nakamura Y."/>
            <person name="Ogasawara N."/>
            <person name="Kuhara S."/>
            <person name="Horikoshi K."/>
        </authorList>
    </citation>
    <scope>NUCLEOTIDE SEQUENCE [LARGE SCALE GENOMIC DNA]</scope>
    <source>
        <strain>ATCC BAA-125 / DSM 18197 / FERM 7344 / JCM 9153 / C-125</strain>
    </source>
</reference>
<protein>
    <recommendedName>
        <fullName evidence="1">Arginine repressor</fullName>
    </recommendedName>
</protein>
<name>ARGR_HALH5</name>
<feature type="chain" id="PRO_0000205066" description="Arginine repressor">
    <location>
        <begin position="1"/>
        <end position="149"/>
    </location>
</feature>
<feature type="helix" evidence="2">
    <location>
        <begin position="7"/>
        <end position="16"/>
    </location>
</feature>
<feature type="helix" evidence="2">
    <location>
        <begin position="22"/>
        <end position="31"/>
    </location>
</feature>
<feature type="helix" evidence="2">
    <location>
        <begin position="38"/>
        <end position="47"/>
    </location>
</feature>
<feature type="strand" evidence="2">
    <location>
        <begin position="51"/>
        <end position="54"/>
    </location>
</feature>
<feature type="strand" evidence="2">
    <location>
        <begin position="56"/>
        <end position="58"/>
    </location>
</feature>
<feature type="strand" evidence="2">
    <location>
        <begin position="60"/>
        <end position="63"/>
    </location>
</feature>
<feature type="helix" evidence="2">
    <location>
        <begin position="66"/>
        <end position="68"/>
    </location>
</feature>
<feature type="helix" evidence="2">
    <location>
        <begin position="72"/>
        <end position="83"/>
    </location>
</feature>
<feature type="strand" evidence="2">
    <location>
        <begin position="84"/>
        <end position="90"/>
    </location>
</feature>
<feature type="strand" evidence="2">
    <location>
        <begin position="93"/>
        <end position="99"/>
    </location>
</feature>
<feature type="helix" evidence="2">
    <location>
        <begin position="103"/>
        <end position="111"/>
    </location>
</feature>
<feature type="strand" evidence="2">
    <location>
        <begin position="118"/>
        <end position="123"/>
    </location>
</feature>
<feature type="strand" evidence="2">
    <location>
        <begin position="125"/>
        <end position="134"/>
    </location>
</feature>
<feature type="helix" evidence="2">
    <location>
        <begin position="137"/>
        <end position="146"/>
    </location>
</feature>
<organism>
    <name type="scientific">Halalkalibacterium halodurans (strain ATCC BAA-125 / DSM 18197 / FERM 7344 / JCM 9153 / C-125)</name>
    <name type="common">Bacillus halodurans</name>
    <dbReference type="NCBI Taxonomy" id="272558"/>
    <lineage>
        <taxon>Bacteria</taxon>
        <taxon>Bacillati</taxon>
        <taxon>Bacillota</taxon>
        <taxon>Bacilli</taxon>
        <taxon>Bacillales</taxon>
        <taxon>Bacillaceae</taxon>
        <taxon>Halalkalibacterium (ex Joshi et al. 2022)</taxon>
    </lineage>
</organism>